<keyword id="KW-0067">ATP-binding</keyword>
<keyword id="KW-0115">cAMP biosynthesis</keyword>
<keyword id="KW-1003">Cell membrane</keyword>
<keyword id="KW-0966">Cell projection</keyword>
<keyword id="KW-0969">Cilium</keyword>
<keyword id="KW-0325">Glycoprotein</keyword>
<keyword id="KW-0456">Lyase</keyword>
<keyword id="KW-0460">Magnesium</keyword>
<keyword id="KW-0464">Manganese</keyword>
<keyword id="KW-0472">Membrane</keyword>
<keyword id="KW-0479">Metal-binding</keyword>
<keyword id="KW-0547">Nucleotide-binding</keyword>
<keyword id="KW-0597">Phosphoprotein</keyword>
<keyword id="KW-1185">Reference proteome</keyword>
<keyword id="KW-0677">Repeat</keyword>
<keyword id="KW-0812">Transmembrane</keyword>
<keyword id="KW-1133">Transmembrane helix</keyword>
<sequence>MSWFSGLLVPKVDERKTAWGERNGQKRPRRGTRTSGFCTPRYMSCLRDAQPPSPTPAAPPRCPWQDEAFIRRGGPGKGTELGLRAVALGFEDTEAMSAVGAAGGGPDVTPGSRRSCWRRLAQVFQSKQFRSAKLERLYQRYFFQMNQSSLTLLMAVLVLLTAVLLAFHAAPARPQPAYVALLACAATLFVALMVVCNRHSFRQDSMWVVSYVVLGILAAVQVGGALAANPRSPSVGLWCPVFFVYITYTLLPIRMRAAVFSGLGLSTLHLILAWQLNRGDAFLWKQLGANMLLFLCTNVIGICTHYPAEVSQRQAFQETRGYIQARLHLPDENRQQERLLLSVLPQHVAMEMKEDINTKKEDMMFHKIYIQKHDNVSILFADIEGFTSLASQCTAQELVMTLNELFARFDKLAAENHCLRIKILGDCYYCVSGLPEARADHAHCCVEMGVDMIEAISLVREVTGVNVNMRVGIHSGRVHCGVLGLRKWQFDVWSNDVTLANHMEAARAGRIHITRATLQYLNGDYEVEPGRGGERNAYLKEQHIETFLILGASQKRKEEKAMLAKLQRTRANSMEGLMPRWVPDRAFSRTKDSKAFRQMGIDDSSKDNRGAQDALNPEDEVDEFLGRAIDARSIDQLRKDHVRRFLLTFQREDLEKKYSRKVDPRFGAYVACALLVFCFICFIQLLVFPHSTVMLGIYASIFVLLLITVLTCAVYSCGSLFPKALRRLSRSIVRSRAHSTVVGIFSVLLVFTSAIANMFTCNHTPIRTCAARMLNVTPADITACHLQQLNYSLGLDAPLCEGTAPTCSFPEYFVGNMLLSLLASSVFLHISSIGKLAMIFVLGLIYLVLLLLGPPSTIFDNYDLLLGVHGLASSNDTFDGLDCPAAGRVALKYMTPVILLVFALALYLHAQQVESTARLDFLWKLQATGEKEEMEELQAYNRRLLHNILPKDVAAHFLARERRNDELYYQSCECVAVMFASIANFSEFYVELEANNEGVECLRLLNEIIADFDEIISEERFRQLEKIKTIGSTYMAASGLNASTYDQAGRSHITALADYAMRLMEQMKHINEHSFNNFQMKIGLNMGPVVAGVIGARKPQYDIWGNTVNVSSRMDSTGVPDRIQVTTDLYQVLAAKRYQLECRGVVKVKGKGEMTTYFLNGGPPS</sequence>
<reference key="1">
    <citation type="journal article" date="1992" name="Proc. Natl. Acad. Sci. U.S.A.">
        <title>Cloning and characterization of a sixth adenylyl cyclase isoform: types V and VI constitute a subgroup within the mammalian adenylyl cyclase family.</title>
        <authorList>
            <person name="Katsushika S."/>
            <person name="Chen L."/>
            <person name="Kawabe J."/>
            <person name="Nilakantan R."/>
            <person name="Halnon N.J."/>
            <person name="Homcy C.J."/>
            <person name="Ishikawa Y."/>
        </authorList>
    </citation>
    <scope>NUCLEOTIDE SEQUENCE [MRNA]</scope>
    <scope>CATALYTIC ACTIVITY</scope>
    <scope>FUNCTION</scope>
    <scope>COFACTOR</scope>
    <scope>ACTIVITY REGULATION</scope>
    <scope>TISSUE SPECIFICITY</scope>
    <source>
        <tissue>Heart</tissue>
    </source>
</reference>
<reference key="2">
    <citation type="journal article" date="2007" name="J. Biol. Chem.">
        <title>Conditional stimulation of type V and VI adenylyl cyclases by G protein betagamma subunits.</title>
        <authorList>
            <person name="Gao X."/>
            <person name="Sadana R."/>
            <person name="Dessauer C.W."/>
            <person name="Patel T.B."/>
        </authorList>
    </citation>
    <scope>CATALYTIC ACTIVITY</scope>
    <scope>FUNCTION</scope>
    <scope>ACTIVITY REGULATION</scope>
    <scope>SUBCELLULAR LOCATION</scope>
</reference>
<reference key="3">
    <citation type="journal article" date="1994" name="J. Biol. Chem.">
        <title>Distinct patterns of bidirectional regulation of mammalian adenylyl cyclases.</title>
        <authorList>
            <person name="Taussig R."/>
            <person name="Tang W.J."/>
            <person name="Hepler J.R."/>
            <person name="Gilman A.G."/>
        </authorList>
    </citation>
    <scope>FUNCTION</scope>
    <scope>CATALYTIC ACTIVITY</scope>
    <scope>ACTIVITY REGULATION</scope>
</reference>
<dbReference type="EC" id="4.6.1.1" evidence="8 9 10"/>
<dbReference type="EMBL" id="M94968">
    <property type="status" value="NOT_ANNOTATED_CDS"/>
    <property type="molecule type" value="mRNA"/>
</dbReference>
<dbReference type="PIR" id="A46180">
    <property type="entry name" value="A46180"/>
</dbReference>
<dbReference type="SMR" id="P30804"/>
<dbReference type="FunCoup" id="P30804">
    <property type="interactions" value="34"/>
</dbReference>
<dbReference type="STRING" id="9615.ENSCAFP00000039800"/>
<dbReference type="GlyCosmos" id="P30804">
    <property type="glycosylation" value="2 sites, No reported glycans"/>
</dbReference>
<dbReference type="SwissPalm" id="P30804"/>
<dbReference type="PaxDb" id="9612-ENSCAFP00000013079"/>
<dbReference type="eggNOG" id="KOG3619">
    <property type="taxonomic scope" value="Eukaryota"/>
</dbReference>
<dbReference type="InParanoid" id="P30804"/>
<dbReference type="OrthoDB" id="2107370at2759"/>
<dbReference type="Proteomes" id="UP000002254">
    <property type="component" value="Unplaced"/>
</dbReference>
<dbReference type="Proteomes" id="UP000694429">
    <property type="component" value="Unplaced"/>
</dbReference>
<dbReference type="Proteomes" id="UP000694542">
    <property type="component" value="Unplaced"/>
</dbReference>
<dbReference type="Proteomes" id="UP000805418">
    <property type="component" value="Unplaced"/>
</dbReference>
<dbReference type="GO" id="GO:0005929">
    <property type="term" value="C:cilium"/>
    <property type="evidence" value="ECO:0007669"/>
    <property type="project" value="UniProtKB-SubCell"/>
</dbReference>
<dbReference type="GO" id="GO:0005886">
    <property type="term" value="C:plasma membrane"/>
    <property type="evidence" value="ECO:0000250"/>
    <property type="project" value="UniProtKB"/>
</dbReference>
<dbReference type="GO" id="GO:0032420">
    <property type="term" value="C:stereocilium"/>
    <property type="evidence" value="ECO:0007669"/>
    <property type="project" value="UniProtKB-SubCell"/>
</dbReference>
<dbReference type="GO" id="GO:0004016">
    <property type="term" value="F:adenylate cyclase activity"/>
    <property type="evidence" value="ECO:0000314"/>
    <property type="project" value="UniProtKB"/>
</dbReference>
<dbReference type="GO" id="GO:0005524">
    <property type="term" value="F:ATP binding"/>
    <property type="evidence" value="ECO:0007669"/>
    <property type="project" value="UniProtKB-KW"/>
</dbReference>
<dbReference type="GO" id="GO:0046872">
    <property type="term" value="F:metal ion binding"/>
    <property type="evidence" value="ECO:0007669"/>
    <property type="project" value="UniProtKB-KW"/>
</dbReference>
<dbReference type="GO" id="GO:0007189">
    <property type="term" value="P:adenylate cyclase-activating G protein-coupled receptor signaling pathway"/>
    <property type="evidence" value="ECO:0000250"/>
    <property type="project" value="UniProtKB"/>
</dbReference>
<dbReference type="GO" id="GO:0006171">
    <property type="term" value="P:cAMP biosynthetic process"/>
    <property type="evidence" value="ECO:0000314"/>
    <property type="project" value="UniProtKB"/>
</dbReference>
<dbReference type="GO" id="GO:1904322">
    <property type="term" value="P:cellular response to forskolin"/>
    <property type="evidence" value="ECO:0000250"/>
    <property type="project" value="UniProtKB"/>
</dbReference>
<dbReference type="GO" id="GO:1904117">
    <property type="term" value="P:cellular response to vasopressin"/>
    <property type="evidence" value="ECO:0000250"/>
    <property type="project" value="UniProtKB"/>
</dbReference>
<dbReference type="GO" id="GO:0035556">
    <property type="term" value="P:intracellular signal transduction"/>
    <property type="evidence" value="ECO:0007669"/>
    <property type="project" value="InterPro"/>
</dbReference>
<dbReference type="GO" id="GO:0035811">
    <property type="term" value="P:negative regulation of urine volume"/>
    <property type="evidence" value="ECO:0000250"/>
    <property type="project" value="UniProtKB"/>
</dbReference>
<dbReference type="GO" id="GO:0003091">
    <property type="term" value="P:renal water homeostasis"/>
    <property type="evidence" value="ECO:0000250"/>
    <property type="project" value="UniProtKB"/>
</dbReference>
<dbReference type="CDD" id="cd07302">
    <property type="entry name" value="CHD"/>
    <property type="match status" value="2"/>
</dbReference>
<dbReference type="FunFam" id="3.30.70.1230:FF:000001">
    <property type="entry name" value="Adenylate cyclase"/>
    <property type="match status" value="1"/>
</dbReference>
<dbReference type="FunFam" id="3.30.70.1230:FF:000002">
    <property type="entry name" value="Adenylate cyclase"/>
    <property type="match status" value="1"/>
</dbReference>
<dbReference type="Gene3D" id="3.30.70.1230">
    <property type="entry name" value="Nucleotide cyclase"/>
    <property type="match status" value="2"/>
</dbReference>
<dbReference type="InterPro" id="IPR001054">
    <property type="entry name" value="A/G_cyclase"/>
</dbReference>
<dbReference type="InterPro" id="IPR018297">
    <property type="entry name" value="A/G_cyclase_CS"/>
</dbReference>
<dbReference type="InterPro" id="IPR032628">
    <property type="entry name" value="AC_N"/>
</dbReference>
<dbReference type="InterPro" id="IPR030672">
    <property type="entry name" value="Adcy"/>
</dbReference>
<dbReference type="InterPro" id="IPR009398">
    <property type="entry name" value="Adcy_conserved_dom"/>
</dbReference>
<dbReference type="InterPro" id="IPR029787">
    <property type="entry name" value="Nucleotide_cyclase"/>
</dbReference>
<dbReference type="PANTHER" id="PTHR45627">
    <property type="entry name" value="ADENYLATE CYCLASE TYPE 1"/>
    <property type="match status" value="1"/>
</dbReference>
<dbReference type="PANTHER" id="PTHR45627:SF11">
    <property type="entry name" value="ADENYLATE CYCLASE TYPE 6"/>
    <property type="match status" value="1"/>
</dbReference>
<dbReference type="Pfam" id="PF16214">
    <property type="entry name" value="AC_N"/>
    <property type="match status" value="1"/>
</dbReference>
<dbReference type="Pfam" id="PF06327">
    <property type="entry name" value="Adcy_cons_dom"/>
    <property type="match status" value="1"/>
</dbReference>
<dbReference type="Pfam" id="PF00211">
    <property type="entry name" value="Guanylate_cyc"/>
    <property type="match status" value="2"/>
</dbReference>
<dbReference type="PIRSF" id="PIRSF039050">
    <property type="entry name" value="Ade_cyc"/>
    <property type="match status" value="1"/>
</dbReference>
<dbReference type="SMART" id="SM00044">
    <property type="entry name" value="CYCc"/>
    <property type="match status" value="2"/>
</dbReference>
<dbReference type="SUPFAM" id="SSF55073">
    <property type="entry name" value="Nucleotide cyclase"/>
    <property type="match status" value="2"/>
</dbReference>
<dbReference type="PROSITE" id="PS00452">
    <property type="entry name" value="GUANYLATE_CYCLASE_1"/>
    <property type="match status" value="2"/>
</dbReference>
<dbReference type="PROSITE" id="PS50125">
    <property type="entry name" value="GUANYLATE_CYCLASE_2"/>
    <property type="match status" value="2"/>
</dbReference>
<proteinExistence type="evidence at protein level"/>
<organism>
    <name type="scientific">Canis lupus familiaris</name>
    <name type="common">Dog</name>
    <name type="synonym">Canis familiaris</name>
    <dbReference type="NCBI Taxonomy" id="9615"/>
    <lineage>
        <taxon>Eukaryota</taxon>
        <taxon>Metazoa</taxon>
        <taxon>Chordata</taxon>
        <taxon>Craniata</taxon>
        <taxon>Vertebrata</taxon>
        <taxon>Euteleostomi</taxon>
        <taxon>Mammalia</taxon>
        <taxon>Eutheria</taxon>
        <taxon>Laurasiatheria</taxon>
        <taxon>Carnivora</taxon>
        <taxon>Caniformia</taxon>
        <taxon>Canidae</taxon>
        <taxon>Canis</taxon>
    </lineage>
</organism>
<feature type="chain" id="PRO_0000195698" description="Adenylate cyclase type 6">
    <location>
        <begin position="1"/>
        <end position="1165"/>
    </location>
</feature>
<feature type="topological domain" description="Cytoplasmic" evidence="6">
    <location>
        <begin position="1"/>
        <end position="149"/>
    </location>
</feature>
<feature type="transmembrane region" description="Helical" evidence="6">
    <location>
        <begin position="150"/>
        <end position="166"/>
    </location>
</feature>
<feature type="transmembrane region" description="Helical" evidence="6">
    <location>
        <begin position="179"/>
        <end position="195"/>
    </location>
</feature>
<feature type="transmembrane region" description="Helical" evidence="6">
    <location>
        <begin position="212"/>
        <end position="228"/>
    </location>
</feature>
<feature type="transmembrane region" description="Helical" evidence="6">
    <location>
        <begin position="237"/>
        <end position="253"/>
    </location>
</feature>
<feature type="transmembrane region" description="Helical" evidence="6">
    <location>
        <begin position="257"/>
        <end position="273"/>
    </location>
</feature>
<feature type="transmembrane region" description="Helical" evidence="6">
    <location>
        <begin position="287"/>
        <end position="303"/>
    </location>
</feature>
<feature type="topological domain" description="Cytoplasmic" evidence="6">
    <location>
        <begin position="304"/>
        <end position="670"/>
    </location>
</feature>
<feature type="transmembrane region" description="Helical" evidence="6">
    <location>
        <begin position="671"/>
        <end position="688"/>
    </location>
</feature>
<feature type="transmembrane region" description="Helical" evidence="6">
    <location>
        <begin position="699"/>
        <end position="715"/>
    </location>
</feature>
<feature type="transmembrane region" description="Helical" evidence="6">
    <location>
        <begin position="740"/>
        <end position="756"/>
    </location>
</feature>
<feature type="topological domain" description="Extracellular" evidence="6">
    <location>
        <begin position="757"/>
        <end position="816"/>
    </location>
</feature>
<feature type="transmembrane region" description="Helical" evidence="6">
    <location>
        <begin position="817"/>
        <end position="833"/>
    </location>
</feature>
<feature type="transmembrane region" description="Helical" evidence="6">
    <location>
        <begin position="836"/>
        <end position="852"/>
    </location>
</feature>
<feature type="transmembrane region" description="Helical" evidence="6">
    <location>
        <begin position="894"/>
        <end position="910"/>
    </location>
</feature>
<feature type="topological domain" description="Cytoplasmic" evidence="6">
    <location>
        <begin position="911"/>
        <end position="1165"/>
    </location>
</feature>
<feature type="binding site" evidence="3">
    <location>
        <begin position="382"/>
        <end position="387"/>
    </location>
    <ligand>
        <name>ATP</name>
        <dbReference type="ChEBI" id="CHEBI:30616"/>
    </ligand>
</feature>
<feature type="binding site" evidence="7">
    <location>
        <position position="382"/>
    </location>
    <ligand>
        <name>Mg(2+)</name>
        <dbReference type="ChEBI" id="CHEBI:18420"/>
        <label>1</label>
        <note>catalytic</note>
    </ligand>
</feature>
<feature type="binding site" evidence="7">
    <location>
        <position position="382"/>
    </location>
    <ligand>
        <name>Mg(2+)</name>
        <dbReference type="ChEBI" id="CHEBI:18420"/>
        <label>2</label>
        <note>catalytic</note>
    </ligand>
</feature>
<feature type="binding site" evidence="7">
    <location>
        <position position="383"/>
    </location>
    <ligand>
        <name>Mg(2+)</name>
        <dbReference type="ChEBI" id="CHEBI:18420"/>
        <label>2</label>
        <note>catalytic</note>
    </ligand>
</feature>
<feature type="binding site" evidence="3">
    <location>
        <begin position="424"/>
        <end position="426"/>
    </location>
    <ligand>
        <name>ATP</name>
        <dbReference type="ChEBI" id="CHEBI:30616"/>
    </ligand>
</feature>
<feature type="binding site" evidence="7">
    <location>
        <position position="426"/>
    </location>
    <ligand>
        <name>Mg(2+)</name>
        <dbReference type="ChEBI" id="CHEBI:18420"/>
        <label>1</label>
        <note>catalytic</note>
    </ligand>
</feature>
<feature type="binding site" evidence="7">
    <location>
        <position position="426"/>
    </location>
    <ligand>
        <name>Mg(2+)</name>
        <dbReference type="ChEBI" id="CHEBI:18420"/>
        <label>2</label>
        <note>catalytic</note>
    </ligand>
</feature>
<feature type="binding site" evidence="3">
    <location>
        <position position="470"/>
    </location>
    <ligand>
        <name>ATP</name>
        <dbReference type="ChEBI" id="CHEBI:30616"/>
    </ligand>
</feature>
<feature type="binding site" evidence="2">
    <location>
        <position position="1028"/>
    </location>
    <ligand>
        <name>ATP</name>
        <dbReference type="ChEBI" id="CHEBI:30616"/>
    </ligand>
</feature>
<feature type="binding site" evidence="2">
    <location>
        <begin position="1102"/>
        <end position="1104"/>
    </location>
    <ligand>
        <name>ATP</name>
        <dbReference type="ChEBI" id="CHEBI:30616"/>
    </ligand>
</feature>
<feature type="binding site" evidence="2">
    <location>
        <begin position="1109"/>
        <end position="1113"/>
    </location>
    <ligand>
        <name>ATP</name>
        <dbReference type="ChEBI" id="CHEBI:30616"/>
    </ligand>
</feature>
<feature type="binding site" evidence="2">
    <location>
        <position position="1149"/>
    </location>
    <ligand>
        <name>ATP</name>
        <dbReference type="ChEBI" id="CHEBI:30616"/>
    </ligand>
</feature>
<feature type="modified residue" description="Phosphoserine" evidence="1">
    <location>
        <position position="53"/>
    </location>
</feature>
<feature type="modified residue" description="Phosphoserine" evidence="5">
    <location>
        <position position="553"/>
    </location>
</feature>
<feature type="modified residue" description="Phosphoserine" evidence="1">
    <location>
        <position position="573"/>
    </location>
</feature>
<feature type="modified residue" description="Phosphoserine" evidence="5">
    <location>
        <position position="659"/>
    </location>
</feature>
<feature type="modified residue" description="Phosphothreonine" evidence="5">
    <location>
        <position position="916"/>
    </location>
</feature>
<feature type="glycosylation site" description="N-linked (GlcNAc...) asparagine" evidence="6">
    <location>
        <position position="790"/>
    </location>
</feature>
<feature type="glycosylation site" description="N-linked (GlcNAc...) asparagine" evidence="6">
    <location>
        <position position="875"/>
    </location>
</feature>
<protein>
    <recommendedName>
        <fullName>Adenylate cyclase type 6</fullName>
        <ecNumber evidence="8 9 10">4.6.1.1</ecNumber>
    </recommendedName>
    <alternativeName>
        <fullName>ATP pyrophosphate-lyase 6</fullName>
    </alternativeName>
    <alternativeName>
        <fullName>Adenylate cyclase type VI</fullName>
    </alternativeName>
    <alternativeName>
        <fullName>Adenylyl cyclase 6</fullName>
    </alternativeName>
    <alternativeName>
        <fullName>Ca(2+)-inhibitable adenylyl cyclase</fullName>
    </alternativeName>
</protein>
<gene>
    <name type="primary">ADCY6</name>
</gene>
<accession>P30804</accession>
<name>ADCY6_CANLF</name>
<evidence type="ECO:0000250" key="1">
    <source>
        <dbReference type="UniProtKB" id="O43306"/>
    </source>
</evidence>
<evidence type="ECO:0000250" key="2">
    <source>
        <dbReference type="UniProtKB" id="P26769"/>
    </source>
</evidence>
<evidence type="ECO:0000250" key="3">
    <source>
        <dbReference type="UniProtKB" id="P30803"/>
    </source>
</evidence>
<evidence type="ECO:0000250" key="4">
    <source>
        <dbReference type="UniProtKB" id="Q01341"/>
    </source>
</evidence>
<evidence type="ECO:0000250" key="5">
    <source>
        <dbReference type="UniProtKB" id="Q03343"/>
    </source>
</evidence>
<evidence type="ECO:0000255" key="6"/>
<evidence type="ECO:0000255" key="7">
    <source>
        <dbReference type="PROSITE-ProRule" id="PRU00099"/>
    </source>
</evidence>
<evidence type="ECO:0000269" key="8">
    <source>
    </source>
</evidence>
<evidence type="ECO:0000269" key="9">
    <source>
    </source>
</evidence>
<evidence type="ECO:0000269" key="10">
    <source>
    </source>
</evidence>
<evidence type="ECO:0000305" key="11"/>
<comment type="function">
    <text evidence="1 4 5 8 9 10">Catalyzes the formation of the signaling molecule cAMP downstream of G protein-coupled receptors (PubMed:1528892, PubMed:17110384, PubMed:8119955). Functions in signaling cascades downstream of the vasopressin receptor in the kidney and has a role in renal water reabsorption. Functions in signaling cascades downstream of PTH1R and plays a role in regulating renal phosphate excretion. Functions in signaling cascades downstream of the VIP and SCT receptors in pancreas and contributes to the regulation of pancreatic amylase and fluid secretion (By similarity). Signaling mediates cAMP-dependent activation of protein kinase PKA (By similarity). This promotes increased phosphorylation of various proteins, including AKT. Plays a role in regulating cardiac sarcoplasmic reticulum Ca(2+) uptake and storage, and is required for normal heart ventricular contractibility. May contribute to normal heart function (By similarity). Mediates vasodilatation after activation of beta-adrenergic receptors by isoproterenol (By similarity). Contributes to bone cell responses to mechanical stimuli (By similarity).</text>
</comment>
<comment type="catalytic activity">
    <reaction evidence="8 9 10">
        <text>ATP = 3',5'-cyclic AMP + diphosphate</text>
        <dbReference type="Rhea" id="RHEA:15389"/>
        <dbReference type="ChEBI" id="CHEBI:30616"/>
        <dbReference type="ChEBI" id="CHEBI:33019"/>
        <dbReference type="ChEBI" id="CHEBI:58165"/>
        <dbReference type="EC" id="4.6.1.1"/>
    </reaction>
</comment>
<comment type="cofactor">
    <cofactor evidence="1">
        <name>Mg(2+)</name>
        <dbReference type="ChEBI" id="CHEBI:18420"/>
    </cofactor>
    <cofactor evidence="8">
        <name>Mn(2+)</name>
        <dbReference type="ChEBI" id="CHEBI:29035"/>
    </cofactor>
    <text evidence="3">Binds 2 magnesium ions per subunit. Is also active with manganese (in vitro).</text>
</comment>
<comment type="activity regulation">
    <text evidence="4 5 8 9 10">Activated by G(s) G alpha protein GNAS (PubMed:17110384). Inhibited by G(i) G alpha protein GNAI1 (PubMed:8119955). Is further activated by the complex formed by GNB1 and GNG2 (PubMed:17110384). Activated by forskolin (By similarity). Inhibited by calcium ions, already at micromolar concentrations (By similarity). Inhibited by adenosine, AMP and their analogs (PubMed:1528892). Phosphorylation by RAF1 results in its activation (By similarity).</text>
</comment>
<comment type="subunit">
    <text evidence="1 4">Part of a complex containing AKAP5, ADCY5, PDE4C and PKD2 (By similarity). Interacts with RAF1. Interacts (via cytoplasmic N-terminus) with GNAS, GNB1 and GNG2 (By similarity).</text>
</comment>
<comment type="subcellular location">
    <subcellularLocation>
        <location evidence="8 9">Cell membrane</location>
        <topology evidence="11">Multi-pass membrane protein</topology>
    </subcellularLocation>
    <subcellularLocation>
        <location evidence="4">Cell projection</location>
        <location evidence="4">Cilium</location>
    </subcellularLocation>
    <subcellularLocation>
        <location evidence="4">Cell projection</location>
        <location evidence="4">Stereocilium</location>
    </subcellularLocation>
</comment>
<comment type="tissue specificity">
    <text evidence="8">Detected in brain and heart.</text>
</comment>
<comment type="domain">
    <text evidence="2">The protein contains two modules with six transmembrane helices each; both are required for catalytic activity. Isolated N-terminal or C-terminal guanylate cyclase domains have no catalytic activity, but when they are brought together, enzyme activity is restored. The active site is at the interface of the two domains. Both contribute substrate-binding residues, but the catalytic metal ions are bound exclusively via the N-terminal guanylate cyclase domain.</text>
</comment>
<comment type="PTM">
    <text evidence="5">Phosphorylation by RAF1 increases enzyme activity. Phosphorylation by PKA on Ser-659 inhibits the GNAS-mediated increase in catalytic activity. Phosphorylation by PKC on Ser-553, Ser-659 and Thr-916 inhibits catalytic activity.</text>
</comment>
<comment type="similarity">
    <text evidence="7">Belongs to the adenylyl cyclase class-4/guanylyl cyclase family.</text>
</comment>